<reference key="1">
    <citation type="submission" date="2007-05" db="EMBL/GenBank/DDBJ databases">
        <title>Complete sequence of Geobacter uraniireducens Rf4.</title>
        <authorList>
            <consortium name="US DOE Joint Genome Institute"/>
            <person name="Copeland A."/>
            <person name="Lucas S."/>
            <person name="Lapidus A."/>
            <person name="Barry K."/>
            <person name="Detter J.C."/>
            <person name="Glavina del Rio T."/>
            <person name="Hammon N."/>
            <person name="Israni S."/>
            <person name="Dalin E."/>
            <person name="Tice H."/>
            <person name="Pitluck S."/>
            <person name="Chertkov O."/>
            <person name="Brettin T."/>
            <person name="Bruce D."/>
            <person name="Han C."/>
            <person name="Schmutz J."/>
            <person name="Larimer F."/>
            <person name="Land M."/>
            <person name="Hauser L."/>
            <person name="Kyrpides N."/>
            <person name="Mikhailova N."/>
            <person name="Shelobolina E."/>
            <person name="Aklujkar M."/>
            <person name="Lovley D."/>
            <person name="Richardson P."/>
        </authorList>
    </citation>
    <scope>NUCLEOTIDE SEQUENCE [LARGE SCALE GENOMIC DNA]</scope>
    <source>
        <strain>ATCC BAA-1134 / JCM 13001 / Rf4</strain>
    </source>
</reference>
<comment type="similarity">
    <text evidence="1">Belongs to the UPF0502 family.</text>
</comment>
<keyword id="KW-1185">Reference proteome</keyword>
<sequence>MKMNLAEVEIRILGCLIEKELTTPENYPLSLNTLTNACNQKSNRAPLMDLAEADVVRGLDKLGARGLARLTTTGGRVAKYRHSLDDSLHLAPPALAVLAELMLRGPQTAGELRNRAERMTPLADIASVEEILGALMEFGPPLVTRLPRQPGRKEQRYAQLFAGEPDLPDDTPAPPPEPARQRVMAENERLARLDGEVSALRAEIASLRSTIEELRVLFE</sequence>
<proteinExistence type="inferred from homology"/>
<protein>
    <recommendedName>
        <fullName evidence="1">UPF0502 protein Gura_3445</fullName>
    </recommendedName>
</protein>
<organism>
    <name type="scientific">Geotalea uraniireducens (strain Rf4)</name>
    <name type="common">Geobacter uraniireducens</name>
    <dbReference type="NCBI Taxonomy" id="351605"/>
    <lineage>
        <taxon>Bacteria</taxon>
        <taxon>Pseudomonadati</taxon>
        <taxon>Thermodesulfobacteriota</taxon>
        <taxon>Desulfuromonadia</taxon>
        <taxon>Geobacterales</taxon>
        <taxon>Geobacteraceae</taxon>
        <taxon>Geotalea</taxon>
    </lineage>
</organism>
<dbReference type="EMBL" id="CP000698">
    <property type="protein sequence ID" value="ABQ27601.1"/>
    <property type="molecule type" value="Genomic_DNA"/>
</dbReference>
<dbReference type="RefSeq" id="WP_011940262.1">
    <property type="nucleotide sequence ID" value="NC_009483.1"/>
</dbReference>
<dbReference type="SMR" id="A5G733"/>
<dbReference type="STRING" id="351605.Gura_3445"/>
<dbReference type="KEGG" id="gur:Gura_3445"/>
<dbReference type="HOGENOM" id="CLU_057831_1_0_7"/>
<dbReference type="OrthoDB" id="9784785at2"/>
<dbReference type="Proteomes" id="UP000006695">
    <property type="component" value="Chromosome"/>
</dbReference>
<dbReference type="Gene3D" id="1.10.10.10">
    <property type="entry name" value="Winged helix-like DNA-binding domain superfamily/Winged helix DNA-binding domain"/>
    <property type="match status" value="2"/>
</dbReference>
<dbReference type="HAMAP" id="MF_01584">
    <property type="entry name" value="UPF0502"/>
    <property type="match status" value="1"/>
</dbReference>
<dbReference type="InterPro" id="IPR007432">
    <property type="entry name" value="DUF480"/>
</dbReference>
<dbReference type="InterPro" id="IPR036388">
    <property type="entry name" value="WH-like_DNA-bd_sf"/>
</dbReference>
<dbReference type="InterPro" id="IPR036390">
    <property type="entry name" value="WH_DNA-bd_sf"/>
</dbReference>
<dbReference type="PANTHER" id="PTHR38768">
    <property type="entry name" value="UPF0502 PROTEIN YCEH"/>
    <property type="match status" value="1"/>
</dbReference>
<dbReference type="PANTHER" id="PTHR38768:SF1">
    <property type="entry name" value="UPF0502 PROTEIN YCEH"/>
    <property type="match status" value="1"/>
</dbReference>
<dbReference type="Pfam" id="PF04337">
    <property type="entry name" value="DUF480"/>
    <property type="match status" value="1"/>
</dbReference>
<dbReference type="SUPFAM" id="SSF46785">
    <property type="entry name" value="Winged helix' DNA-binding domain"/>
    <property type="match status" value="2"/>
</dbReference>
<feature type="chain" id="PRO_0000382562" description="UPF0502 protein Gura_3445">
    <location>
        <begin position="1"/>
        <end position="219"/>
    </location>
</feature>
<feature type="region of interest" description="Disordered" evidence="2">
    <location>
        <begin position="162"/>
        <end position="181"/>
    </location>
</feature>
<name>Y3445_GEOUR</name>
<evidence type="ECO:0000255" key="1">
    <source>
        <dbReference type="HAMAP-Rule" id="MF_01584"/>
    </source>
</evidence>
<evidence type="ECO:0000256" key="2">
    <source>
        <dbReference type="SAM" id="MobiDB-lite"/>
    </source>
</evidence>
<gene>
    <name type="ordered locus">Gura_3445</name>
</gene>
<accession>A5G733</accession>